<name>CG025_HUMAN</name>
<dbReference type="EMBL" id="AK024820">
    <property type="protein sequence ID" value="BAB15019.1"/>
    <property type="molecule type" value="mRNA"/>
</dbReference>
<dbReference type="EMBL" id="AC010132">
    <property type="status" value="NOT_ANNOTATED_CDS"/>
    <property type="molecule type" value="Genomic_DNA"/>
</dbReference>
<dbReference type="EMBL" id="CH236951">
    <property type="protein sequence ID" value="EAL24004.1"/>
    <property type="molecule type" value="Genomic_DNA"/>
</dbReference>
<dbReference type="EMBL" id="BC000769">
    <property type="protein sequence ID" value="AAH00769.1"/>
    <property type="molecule type" value="mRNA"/>
</dbReference>
<dbReference type="EMBL" id="BC001845">
    <property type="protein sequence ID" value="AAH01845.1"/>
    <property type="molecule type" value="mRNA"/>
</dbReference>
<dbReference type="CCDS" id="CCDS5466.1">
    <molecule id="Q9BPX7-1"/>
</dbReference>
<dbReference type="RefSeq" id="NP_001093328.2">
    <molecule id="Q9BPX7-1"/>
    <property type="nucleotide sequence ID" value="NM_001099858.2"/>
</dbReference>
<dbReference type="RefSeq" id="NP_001350365.1">
    <molecule id="Q9BPX7-1"/>
    <property type="nucleotide sequence ID" value="NM_001363436.1"/>
</dbReference>
<dbReference type="RefSeq" id="NP_076959.2">
    <molecule id="Q9BPX7-1"/>
    <property type="nucleotide sequence ID" value="NM_024054.3"/>
</dbReference>
<dbReference type="RefSeq" id="XP_005249901.1">
    <property type="nucleotide sequence ID" value="XM_005249844.3"/>
</dbReference>
<dbReference type="RefSeq" id="XP_016868086.1">
    <property type="nucleotide sequence ID" value="XM_017012597.1"/>
</dbReference>
<dbReference type="SMR" id="Q9BPX7"/>
<dbReference type="BioGRID" id="122489">
    <property type="interactions" value="23"/>
</dbReference>
<dbReference type="FunCoup" id="Q9BPX7">
    <property type="interactions" value="670"/>
</dbReference>
<dbReference type="IntAct" id="Q9BPX7">
    <property type="interactions" value="26"/>
</dbReference>
<dbReference type="MINT" id="Q9BPX7"/>
<dbReference type="STRING" id="9606.ENSP00000413029"/>
<dbReference type="CarbonylDB" id="Q9BPX7"/>
<dbReference type="GlyGen" id="Q9BPX7">
    <property type="glycosylation" value="2 sites, 1 N-linked glycan (1 site), 1 O-linked glycan (1 site)"/>
</dbReference>
<dbReference type="iPTMnet" id="Q9BPX7"/>
<dbReference type="PhosphoSitePlus" id="Q9BPX7"/>
<dbReference type="BioMuta" id="C7orf25"/>
<dbReference type="DMDM" id="74732797"/>
<dbReference type="jPOST" id="Q9BPX7"/>
<dbReference type="MassIVE" id="Q9BPX7"/>
<dbReference type="PaxDb" id="9606-ENSP00000413029"/>
<dbReference type="PeptideAtlas" id="Q9BPX7"/>
<dbReference type="ProteomicsDB" id="78593">
    <molecule id="Q9BPX7-1"/>
</dbReference>
<dbReference type="Pumba" id="Q9BPX7"/>
<dbReference type="Antibodypedia" id="13143">
    <property type="antibodies" value="64 antibodies from 12 providers"/>
</dbReference>
<dbReference type="DNASU" id="79020"/>
<dbReference type="Ensembl" id="ENST00000350427.5">
    <molecule id="Q9BPX7-1"/>
    <property type="protein sequence ID" value="ENSP00000343364.4"/>
    <property type="gene ID" value="ENSG00000136197.14"/>
</dbReference>
<dbReference type="Ensembl" id="ENST00000438029.1">
    <molecule id="Q9BPX7-1"/>
    <property type="protein sequence ID" value="ENSP00000396597.1"/>
    <property type="gene ID" value="ENSG00000136197.14"/>
</dbReference>
<dbReference type="Ensembl" id="ENST00000447342.5">
    <molecule id="Q9BPX7-2"/>
    <property type="protein sequence ID" value="ENSP00000413029.2"/>
    <property type="gene ID" value="ENSG00000136197.14"/>
</dbReference>
<dbReference type="GeneID" id="79020"/>
<dbReference type="KEGG" id="hsa:79020"/>
<dbReference type="MANE-Select" id="ENST00000350427.5">
    <property type="protein sequence ID" value="ENSP00000343364.4"/>
    <property type="RefSeq nucleotide sequence ID" value="NM_001099858.2"/>
    <property type="RefSeq protein sequence ID" value="NP_001093328.2"/>
</dbReference>
<dbReference type="UCSC" id="uc003thx.5">
    <molecule id="Q9BPX7-1"/>
    <property type="organism name" value="human"/>
</dbReference>
<dbReference type="AGR" id="HGNC:21703"/>
<dbReference type="CTD" id="79020"/>
<dbReference type="GeneCards" id="C7orf25"/>
<dbReference type="HGNC" id="HGNC:21703">
    <property type="gene designation" value="C7orf25"/>
</dbReference>
<dbReference type="HPA" id="ENSG00000136197">
    <property type="expression patterns" value="Low tissue specificity"/>
</dbReference>
<dbReference type="neXtProt" id="NX_Q9BPX7"/>
<dbReference type="PharmGKB" id="PA134976499"/>
<dbReference type="VEuPathDB" id="HostDB:ENSG00000136197"/>
<dbReference type="VEuPathDB" id="HostDB:ENSG00000256646"/>
<dbReference type="eggNOG" id="KOG4529">
    <property type="taxonomic scope" value="Eukaryota"/>
</dbReference>
<dbReference type="GeneTree" id="ENSGT00390000014722"/>
<dbReference type="HOGENOM" id="CLU_054053_0_0_1"/>
<dbReference type="InParanoid" id="Q9BPX7"/>
<dbReference type="OMA" id="HFCMFQR"/>
<dbReference type="OrthoDB" id="441890at2759"/>
<dbReference type="PAN-GO" id="Q9BPX7">
    <property type="GO annotations" value="0 GO annotations based on evolutionary models"/>
</dbReference>
<dbReference type="PhylomeDB" id="Q9BPX7"/>
<dbReference type="TreeFam" id="TF105980"/>
<dbReference type="PathwayCommons" id="Q9BPX7"/>
<dbReference type="SignaLink" id="Q9BPX7"/>
<dbReference type="BioGRID-ORCS" id="79020">
    <property type="hits" value="19 hits in 1142 CRISPR screens"/>
</dbReference>
<dbReference type="ChiTaRS" id="C7orf25">
    <property type="organism name" value="human"/>
</dbReference>
<dbReference type="GenomeRNAi" id="79020"/>
<dbReference type="Pharos" id="Q9BPX7">
    <property type="development level" value="Tdark"/>
</dbReference>
<dbReference type="PRO" id="PR:Q9BPX7"/>
<dbReference type="Proteomes" id="UP000005640">
    <property type="component" value="Chromosome 7"/>
</dbReference>
<dbReference type="RNAct" id="Q9BPX7">
    <property type="molecule type" value="protein"/>
</dbReference>
<dbReference type="Bgee" id="ENSG00000136197">
    <property type="expression patterns" value="Expressed in primordial germ cell in gonad and 99 other cell types or tissues"/>
</dbReference>
<dbReference type="ExpressionAtlas" id="Q9BPX7">
    <property type="expression patterns" value="baseline and differential"/>
</dbReference>
<dbReference type="InterPro" id="IPR010733">
    <property type="entry name" value="DUF1308"/>
</dbReference>
<dbReference type="InterPro" id="IPR041076">
    <property type="entry name" value="DUF5614"/>
</dbReference>
<dbReference type="PANTHER" id="PTHR13379">
    <property type="entry name" value="UNCHARACTERIZED DUF1308"/>
    <property type="match status" value="1"/>
</dbReference>
<dbReference type="PANTHER" id="PTHR13379:SF0">
    <property type="entry name" value="UPF0415 PROTEIN C7ORF25"/>
    <property type="match status" value="1"/>
</dbReference>
<dbReference type="Pfam" id="PF07000">
    <property type="entry name" value="DUF1308"/>
    <property type="match status" value="1"/>
</dbReference>
<dbReference type="Pfam" id="PF18474">
    <property type="entry name" value="DUF5614"/>
    <property type="match status" value="1"/>
</dbReference>
<gene>
    <name type="primary">C7orf25</name>
</gene>
<comment type="interaction">
    <interactant intactId="EBI-718586">
        <id>Q9BPX7</id>
    </interactant>
    <interactant intactId="EBI-4403245">
        <id>O00178</id>
        <label>GTPBP1</label>
    </interactant>
    <organismsDiffer>false</organismsDiffer>
    <experiments>3</experiments>
</comment>
<comment type="interaction">
    <interactant intactId="EBI-718586">
        <id>Q9BPX7</id>
    </interactant>
    <interactant intactId="EBI-973138">
        <id>P49792</id>
        <label>RANBP2</label>
    </interactant>
    <organismsDiffer>false</organismsDiffer>
    <experiments>3</experiments>
</comment>
<comment type="interaction">
    <interactant intactId="EBI-718586">
        <id>Q9BPX7</id>
    </interactant>
    <interactant intactId="EBI-1042683">
        <id>P26639</id>
        <label>TARS1</label>
    </interactant>
    <organismsDiffer>false</organismsDiffer>
    <experiments>3</experiments>
</comment>
<comment type="interaction">
    <interactant intactId="EBI-718586">
        <id>Q9BPX7</id>
    </interactant>
    <interactant intactId="EBI-10173104">
        <id>B2RDX5</id>
    </interactant>
    <organismsDiffer>false</organismsDiffer>
    <experiments>3</experiments>
</comment>
<comment type="alternative products">
    <event type="alternative splicing"/>
    <isoform>
        <id>Q9BPX7-1</id>
        <name>1</name>
        <sequence type="displayed"/>
    </isoform>
    <isoform>
        <id>Q9BPX7-2</id>
        <name>2</name>
        <sequence type="described" ref="VSP_047243"/>
    </isoform>
</comment>
<comment type="similarity">
    <text evidence="1">Belongs to the UPF0415 family.</text>
</comment>
<protein>
    <recommendedName>
        <fullName>UPF0415 protein C7orf25</fullName>
    </recommendedName>
</protein>
<reference key="1">
    <citation type="journal article" date="2004" name="Nat. Genet.">
        <title>Complete sequencing and characterization of 21,243 full-length human cDNAs.</title>
        <authorList>
            <person name="Ota T."/>
            <person name="Suzuki Y."/>
            <person name="Nishikawa T."/>
            <person name="Otsuki T."/>
            <person name="Sugiyama T."/>
            <person name="Irie R."/>
            <person name="Wakamatsu A."/>
            <person name="Hayashi K."/>
            <person name="Sato H."/>
            <person name="Nagai K."/>
            <person name="Kimura K."/>
            <person name="Makita H."/>
            <person name="Sekine M."/>
            <person name="Obayashi M."/>
            <person name="Nishi T."/>
            <person name="Shibahara T."/>
            <person name="Tanaka T."/>
            <person name="Ishii S."/>
            <person name="Yamamoto J."/>
            <person name="Saito K."/>
            <person name="Kawai Y."/>
            <person name="Isono Y."/>
            <person name="Nakamura Y."/>
            <person name="Nagahari K."/>
            <person name="Murakami K."/>
            <person name="Yasuda T."/>
            <person name="Iwayanagi T."/>
            <person name="Wagatsuma M."/>
            <person name="Shiratori A."/>
            <person name="Sudo H."/>
            <person name="Hosoiri T."/>
            <person name="Kaku Y."/>
            <person name="Kodaira H."/>
            <person name="Kondo H."/>
            <person name="Sugawara M."/>
            <person name="Takahashi M."/>
            <person name="Kanda K."/>
            <person name="Yokoi T."/>
            <person name="Furuya T."/>
            <person name="Kikkawa E."/>
            <person name="Omura Y."/>
            <person name="Abe K."/>
            <person name="Kamihara K."/>
            <person name="Katsuta N."/>
            <person name="Sato K."/>
            <person name="Tanikawa M."/>
            <person name="Yamazaki M."/>
            <person name="Ninomiya K."/>
            <person name="Ishibashi T."/>
            <person name="Yamashita H."/>
            <person name="Murakawa K."/>
            <person name="Fujimori K."/>
            <person name="Tanai H."/>
            <person name="Kimata M."/>
            <person name="Watanabe M."/>
            <person name="Hiraoka S."/>
            <person name="Chiba Y."/>
            <person name="Ishida S."/>
            <person name="Ono Y."/>
            <person name="Takiguchi S."/>
            <person name="Watanabe S."/>
            <person name="Yosida M."/>
            <person name="Hotuta T."/>
            <person name="Kusano J."/>
            <person name="Kanehori K."/>
            <person name="Takahashi-Fujii A."/>
            <person name="Hara H."/>
            <person name="Tanase T.-O."/>
            <person name="Nomura Y."/>
            <person name="Togiya S."/>
            <person name="Komai F."/>
            <person name="Hara R."/>
            <person name="Takeuchi K."/>
            <person name="Arita M."/>
            <person name="Imose N."/>
            <person name="Musashino K."/>
            <person name="Yuuki H."/>
            <person name="Oshima A."/>
            <person name="Sasaki N."/>
            <person name="Aotsuka S."/>
            <person name="Yoshikawa Y."/>
            <person name="Matsunawa H."/>
            <person name="Ichihara T."/>
            <person name="Shiohata N."/>
            <person name="Sano S."/>
            <person name="Moriya S."/>
            <person name="Momiyama H."/>
            <person name="Satoh N."/>
            <person name="Takami S."/>
            <person name="Terashima Y."/>
            <person name="Suzuki O."/>
            <person name="Nakagawa S."/>
            <person name="Senoh A."/>
            <person name="Mizoguchi H."/>
            <person name="Goto Y."/>
            <person name="Shimizu F."/>
            <person name="Wakebe H."/>
            <person name="Hishigaki H."/>
            <person name="Watanabe T."/>
            <person name="Sugiyama A."/>
            <person name="Takemoto M."/>
            <person name="Kawakami B."/>
            <person name="Yamazaki M."/>
            <person name="Watanabe K."/>
            <person name="Kumagai A."/>
            <person name="Itakura S."/>
            <person name="Fukuzumi Y."/>
            <person name="Fujimori Y."/>
            <person name="Komiyama M."/>
            <person name="Tashiro H."/>
            <person name="Tanigami A."/>
            <person name="Fujiwara T."/>
            <person name="Ono T."/>
            <person name="Yamada K."/>
            <person name="Fujii Y."/>
            <person name="Ozaki K."/>
            <person name="Hirao M."/>
            <person name="Ohmori Y."/>
            <person name="Kawabata A."/>
            <person name="Hikiji T."/>
            <person name="Kobatake N."/>
            <person name="Inagaki H."/>
            <person name="Ikema Y."/>
            <person name="Okamoto S."/>
            <person name="Okitani R."/>
            <person name="Kawakami T."/>
            <person name="Noguchi S."/>
            <person name="Itoh T."/>
            <person name="Shigeta K."/>
            <person name="Senba T."/>
            <person name="Matsumura K."/>
            <person name="Nakajima Y."/>
            <person name="Mizuno T."/>
            <person name="Morinaga M."/>
            <person name="Sasaki M."/>
            <person name="Togashi T."/>
            <person name="Oyama M."/>
            <person name="Hata H."/>
            <person name="Watanabe M."/>
            <person name="Komatsu T."/>
            <person name="Mizushima-Sugano J."/>
            <person name="Satoh T."/>
            <person name="Shirai Y."/>
            <person name="Takahashi Y."/>
            <person name="Nakagawa K."/>
            <person name="Okumura K."/>
            <person name="Nagase T."/>
            <person name="Nomura N."/>
            <person name="Kikuchi H."/>
            <person name="Masuho Y."/>
            <person name="Yamashita R."/>
            <person name="Nakai K."/>
            <person name="Yada T."/>
            <person name="Nakamura Y."/>
            <person name="Ohara O."/>
            <person name="Isogai T."/>
            <person name="Sugano S."/>
        </authorList>
    </citation>
    <scope>NUCLEOTIDE SEQUENCE [LARGE SCALE MRNA] (ISOFORM 1)</scope>
</reference>
<reference key="2">
    <citation type="journal article" date="2003" name="Nature">
        <title>The DNA sequence of human chromosome 7.</title>
        <authorList>
            <person name="Hillier L.W."/>
            <person name="Fulton R.S."/>
            <person name="Fulton L.A."/>
            <person name="Graves T.A."/>
            <person name="Pepin K.H."/>
            <person name="Wagner-McPherson C."/>
            <person name="Layman D."/>
            <person name="Maas J."/>
            <person name="Jaeger S."/>
            <person name="Walker R."/>
            <person name="Wylie K."/>
            <person name="Sekhon M."/>
            <person name="Becker M.C."/>
            <person name="O'Laughlin M.D."/>
            <person name="Schaller M.E."/>
            <person name="Fewell G.A."/>
            <person name="Delehaunty K.D."/>
            <person name="Miner T.L."/>
            <person name="Nash W.E."/>
            <person name="Cordes M."/>
            <person name="Du H."/>
            <person name="Sun H."/>
            <person name="Edwards J."/>
            <person name="Bradshaw-Cordum H."/>
            <person name="Ali J."/>
            <person name="Andrews S."/>
            <person name="Isak A."/>
            <person name="Vanbrunt A."/>
            <person name="Nguyen C."/>
            <person name="Du F."/>
            <person name="Lamar B."/>
            <person name="Courtney L."/>
            <person name="Kalicki J."/>
            <person name="Ozersky P."/>
            <person name="Bielicki L."/>
            <person name="Scott K."/>
            <person name="Holmes A."/>
            <person name="Harkins R."/>
            <person name="Harris A."/>
            <person name="Strong C.M."/>
            <person name="Hou S."/>
            <person name="Tomlinson C."/>
            <person name="Dauphin-Kohlberg S."/>
            <person name="Kozlowicz-Reilly A."/>
            <person name="Leonard S."/>
            <person name="Rohlfing T."/>
            <person name="Rock S.M."/>
            <person name="Tin-Wollam A.-M."/>
            <person name="Abbott A."/>
            <person name="Minx P."/>
            <person name="Maupin R."/>
            <person name="Strowmatt C."/>
            <person name="Latreille P."/>
            <person name="Miller N."/>
            <person name="Johnson D."/>
            <person name="Murray J."/>
            <person name="Woessner J.P."/>
            <person name="Wendl M.C."/>
            <person name="Yang S.-P."/>
            <person name="Schultz B.R."/>
            <person name="Wallis J.W."/>
            <person name="Spieth J."/>
            <person name="Bieri T.A."/>
            <person name="Nelson J.O."/>
            <person name="Berkowicz N."/>
            <person name="Wohldmann P.E."/>
            <person name="Cook L.L."/>
            <person name="Hickenbotham M.T."/>
            <person name="Eldred J."/>
            <person name="Williams D."/>
            <person name="Bedell J.A."/>
            <person name="Mardis E.R."/>
            <person name="Clifton S.W."/>
            <person name="Chissoe S.L."/>
            <person name="Marra M.A."/>
            <person name="Raymond C."/>
            <person name="Haugen E."/>
            <person name="Gillett W."/>
            <person name="Zhou Y."/>
            <person name="James R."/>
            <person name="Phelps K."/>
            <person name="Iadanoto S."/>
            <person name="Bubb K."/>
            <person name="Simms E."/>
            <person name="Levy R."/>
            <person name="Clendenning J."/>
            <person name="Kaul R."/>
            <person name="Kent W.J."/>
            <person name="Furey T.S."/>
            <person name="Baertsch R.A."/>
            <person name="Brent M.R."/>
            <person name="Keibler E."/>
            <person name="Flicek P."/>
            <person name="Bork P."/>
            <person name="Suyama M."/>
            <person name="Bailey J.A."/>
            <person name="Portnoy M.E."/>
            <person name="Torrents D."/>
            <person name="Chinwalla A.T."/>
            <person name="Gish W.R."/>
            <person name="Eddy S.R."/>
            <person name="McPherson J.D."/>
            <person name="Olson M.V."/>
            <person name="Eichler E.E."/>
            <person name="Green E.D."/>
            <person name="Waterston R.H."/>
            <person name="Wilson R.K."/>
        </authorList>
    </citation>
    <scope>NUCLEOTIDE SEQUENCE [LARGE SCALE GENOMIC DNA]</scope>
</reference>
<reference key="3">
    <citation type="journal article" date="2003" name="Science">
        <title>Human chromosome 7: DNA sequence and biology.</title>
        <authorList>
            <person name="Scherer S.W."/>
            <person name="Cheung J."/>
            <person name="MacDonald J.R."/>
            <person name="Osborne L.R."/>
            <person name="Nakabayashi K."/>
            <person name="Herbrick J.-A."/>
            <person name="Carson A.R."/>
            <person name="Parker-Katiraee L."/>
            <person name="Skaug J."/>
            <person name="Khaja R."/>
            <person name="Zhang J."/>
            <person name="Hudek A.K."/>
            <person name="Li M."/>
            <person name="Haddad M."/>
            <person name="Duggan G.E."/>
            <person name="Fernandez B.A."/>
            <person name="Kanematsu E."/>
            <person name="Gentles S."/>
            <person name="Christopoulos C.C."/>
            <person name="Choufani S."/>
            <person name="Kwasnicka D."/>
            <person name="Zheng X.H."/>
            <person name="Lai Z."/>
            <person name="Nusskern D.R."/>
            <person name="Zhang Q."/>
            <person name="Gu Z."/>
            <person name="Lu F."/>
            <person name="Zeesman S."/>
            <person name="Nowaczyk M.J."/>
            <person name="Teshima I."/>
            <person name="Chitayat D."/>
            <person name="Shuman C."/>
            <person name="Weksberg R."/>
            <person name="Zackai E.H."/>
            <person name="Grebe T.A."/>
            <person name="Cox S.R."/>
            <person name="Kirkpatrick S.J."/>
            <person name="Rahman N."/>
            <person name="Friedman J.M."/>
            <person name="Heng H.H.Q."/>
            <person name="Pelicci P.G."/>
            <person name="Lo-Coco F."/>
            <person name="Belloni E."/>
            <person name="Shaffer L.G."/>
            <person name="Pober B."/>
            <person name="Morton C.C."/>
            <person name="Gusella J.F."/>
            <person name="Bruns G.A.P."/>
            <person name="Korf B.R."/>
            <person name="Quade B.J."/>
            <person name="Ligon A.H."/>
            <person name="Ferguson H."/>
            <person name="Higgins A.W."/>
            <person name="Leach N.T."/>
            <person name="Herrick S.R."/>
            <person name="Lemyre E."/>
            <person name="Farra C.G."/>
            <person name="Kim H.-G."/>
            <person name="Summers A.M."/>
            <person name="Gripp K.W."/>
            <person name="Roberts W."/>
            <person name="Szatmari P."/>
            <person name="Winsor E.J.T."/>
            <person name="Grzeschik K.-H."/>
            <person name="Teebi A."/>
            <person name="Minassian B.A."/>
            <person name="Kere J."/>
            <person name="Armengol L."/>
            <person name="Pujana M.A."/>
            <person name="Estivill X."/>
            <person name="Wilson M.D."/>
            <person name="Koop B.F."/>
            <person name="Tosi S."/>
            <person name="Moore G.E."/>
            <person name="Boright A.P."/>
            <person name="Zlotorynski E."/>
            <person name="Kerem B."/>
            <person name="Kroisel P.M."/>
            <person name="Petek E."/>
            <person name="Oscier D.G."/>
            <person name="Mould S.J."/>
            <person name="Doehner H."/>
            <person name="Doehner K."/>
            <person name="Rommens J.M."/>
            <person name="Vincent J.B."/>
            <person name="Venter J.C."/>
            <person name="Li P.W."/>
            <person name="Mural R.J."/>
            <person name="Adams M.D."/>
            <person name="Tsui L.-C."/>
        </authorList>
    </citation>
    <scope>NUCLEOTIDE SEQUENCE [LARGE SCALE GENOMIC DNA]</scope>
</reference>
<reference key="4">
    <citation type="journal article" date="2004" name="Genome Res.">
        <title>The status, quality, and expansion of the NIH full-length cDNA project: the Mammalian Gene Collection (MGC).</title>
        <authorList>
            <consortium name="The MGC Project Team"/>
        </authorList>
    </citation>
    <scope>NUCLEOTIDE SEQUENCE [LARGE SCALE MRNA]</scope>
    <source>
        <tissue>Muscle</tissue>
    </source>
</reference>
<reference key="5">
    <citation type="journal article" date="2006" name="Cell">
        <title>Global, in vivo, and site-specific phosphorylation dynamics in signaling networks.</title>
        <authorList>
            <person name="Olsen J.V."/>
            <person name="Blagoev B."/>
            <person name="Gnad F."/>
            <person name="Macek B."/>
            <person name="Kumar C."/>
            <person name="Mortensen P."/>
            <person name="Mann M."/>
        </authorList>
    </citation>
    <scope>IDENTIFICATION BY MASS SPECTROMETRY [LARGE SCALE ANALYSIS]</scope>
    <source>
        <tissue>Cervix carcinoma</tissue>
    </source>
</reference>
<evidence type="ECO:0000305" key="1"/>
<accession>Q9BPX7</accession>
<accession>A4D1V2</accession>
<accession>J3KR36</accession>
<accession>Q9H779</accession>
<sequence length="421" mass="46451">MSAHSMLCERIAIAKELIKRAESLSRSRKGGIEGGAKLCSKLKAELKFLQKVEAGKVAIKESHLQSTNLTHLRAIVESAENLEEVVSVLHVFGYTDTLGEKQTLVVDVVANGGHTWVKAIGRKAEALHNIWLGRGQYGDKSIIEQAEDFLQASHQQPVQYSNPHIIFAFYNSVSSPMAEKLKEMGISVRGDIVAVNALLDHPEELQPSESESDDEGPELLQVTRVDRENILASVAFPTEIKVDVCKRVNLDITTLITYVSALSYGGCHFIFKEKVLTEQAEQERKEQVLPQLEAFMKDKELFACESAVKDFQSILDTLGGPGERERATVLIKRINVVPDQPSERALRLVASSKINSRSLTIFGTGDTLKAITMTANSGFVRAANNQGVKFSVFIHQPRALTESKEALATPLPKDYTTDSEH</sequence>
<organism>
    <name type="scientific">Homo sapiens</name>
    <name type="common">Human</name>
    <dbReference type="NCBI Taxonomy" id="9606"/>
    <lineage>
        <taxon>Eukaryota</taxon>
        <taxon>Metazoa</taxon>
        <taxon>Chordata</taxon>
        <taxon>Craniata</taxon>
        <taxon>Vertebrata</taxon>
        <taxon>Euteleostomi</taxon>
        <taxon>Mammalia</taxon>
        <taxon>Eutheria</taxon>
        <taxon>Euarchontoglires</taxon>
        <taxon>Primates</taxon>
        <taxon>Haplorrhini</taxon>
        <taxon>Catarrhini</taxon>
        <taxon>Hominidae</taxon>
        <taxon>Homo</taxon>
    </lineage>
</organism>
<proteinExistence type="evidence at protein level"/>
<feature type="chain" id="PRO_0000279529" description="UPF0415 protein C7orf25">
    <location>
        <begin position="1"/>
        <end position="421"/>
    </location>
</feature>
<feature type="splice variant" id="VSP_047243" description="In isoform 2." evidence="1">
    <original>M</original>
    <variation>MQEVPEAAGLARVEPPRRSSGVGAARLRFPGGSRPLRARACVLALAVLALPERNNADSM</variation>
    <location>
        <position position="1"/>
    </location>
</feature>
<feature type="sequence variant" id="VAR_053848" description="In dbSNP:rs3735471.">
    <original>G</original>
    <variation>E</variation>
    <location>
        <position position="265"/>
    </location>
</feature>
<feature type="sequence conflict" description="In Ref. 1; BAB15019." evidence="1" ref="1">
    <original>W</original>
    <variation>R</variation>
    <location>
        <position position="131"/>
    </location>
</feature>
<keyword id="KW-0025">Alternative splicing</keyword>
<keyword id="KW-1267">Proteomics identification</keyword>
<keyword id="KW-1185">Reference proteome</keyword>